<evidence type="ECO:0000255" key="1">
    <source>
        <dbReference type="PROSITE-ProRule" id="PRU10023"/>
    </source>
</evidence>
<evidence type="ECO:0000305" key="2"/>
<sequence>MASSVDMKAIRDAQRAEGPATILAIGTATPANCVYQADYPDYYFRITKSEHMVDLKEKFKRMCDKSMIRKRYMHITEEYLKQNPNMCAYMAPSLDVRQDLVVVEVPKLGKEAAMKAIKEWGHPKSKITHLIFCTTSGVDMPGADYQLTKLLGLRPSVKRFMMYQQGCFAGGTVLRLAKDLAENNKGARVLVVCSEITAVTFRGPNDTHLDSLVGQALFGDGAAAVIVGSDPDLTTERPLFEMVSAAQTILPDSEGAIDGHLREVGLTFHLLKDVPGLISKNIEKALTTAFSPLGINDWNSIFWIAHPGGPAILDQVELKLGLKEEKLRATRHVLSEYGNMSSACVLFIIDEMRKKSSENGAGTTGEGLEWGVLFGFGPGLTVETVVLHSVPTTVTVAV</sequence>
<dbReference type="EC" id="2.3.1.74"/>
<dbReference type="EMBL" id="Z38096">
    <property type="protein sequence ID" value="CAA86218.1"/>
    <property type="molecule type" value="mRNA"/>
</dbReference>
<dbReference type="PIR" id="S56699">
    <property type="entry name" value="S56699"/>
</dbReference>
<dbReference type="SMR" id="P48390"/>
<dbReference type="UniPathway" id="UPA00154"/>
<dbReference type="GO" id="GO:0016210">
    <property type="term" value="F:naringenin-chalcone synthase activity"/>
    <property type="evidence" value="ECO:0007669"/>
    <property type="project" value="UniProtKB-EC"/>
</dbReference>
<dbReference type="GO" id="GO:0009813">
    <property type="term" value="P:flavonoid biosynthetic process"/>
    <property type="evidence" value="ECO:0007669"/>
    <property type="project" value="UniProtKB-UniPathway"/>
</dbReference>
<dbReference type="GO" id="GO:0030639">
    <property type="term" value="P:polyketide biosynthetic process"/>
    <property type="evidence" value="ECO:0007669"/>
    <property type="project" value="TreeGrafter"/>
</dbReference>
<dbReference type="CDD" id="cd00831">
    <property type="entry name" value="CHS_like"/>
    <property type="match status" value="1"/>
</dbReference>
<dbReference type="FunFam" id="3.40.47.10:FF:000014">
    <property type="entry name" value="Chalcone synthase 1"/>
    <property type="match status" value="1"/>
</dbReference>
<dbReference type="FunFam" id="3.40.47.10:FF:000025">
    <property type="entry name" value="Chalcone synthase 2"/>
    <property type="match status" value="1"/>
</dbReference>
<dbReference type="Gene3D" id="3.40.47.10">
    <property type="match status" value="2"/>
</dbReference>
<dbReference type="InterPro" id="IPR012328">
    <property type="entry name" value="Chalcone/stilbene_synt_C"/>
</dbReference>
<dbReference type="InterPro" id="IPR001099">
    <property type="entry name" value="Chalcone/stilbene_synt_N"/>
</dbReference>
<dbReference type="InterPro" id="IPR018088">
    <property type="entry name" value="Chalcone/stilbene_synthase_AS"/>
</dbReference>
<dbReference type="InterPro" id="IPR011141">
    <property type="entry name" value="Polyketide_synthase_type-III"/>
</dbReference>
<dbReference type="InterPro" id="IPR016039">
    <property type="entry name" value="Thiolase-like"/>
</dbReference>
<dbReference type="PANTHER" id="PTHR11877:SF14">
    <property type="entry name" value="CHALCONE SYNTHASE"/>
    <property type="match status" value="1"/>
</dbReference>
<dbReference type="PANTHER" id="PTHR11877">
    <property type="entry name" value="HYDROXYMETHYLGLUTARYL-COA SYNTHASE"/>
    <property type="match status" value="1"/>
</dbReference>
<dbReference type="Pfam" id="PF02797">
    <property type="entry name" value="Chal_sti_synt_C"/>
    <property type="match status" value="1"/>
</dbReference>
<dbReference type="Pfam" id="PF00195">
    <property type="entry name" value="Chal_sti_synt_N"/>
    <property type="match status" value="1"/>
</dbReference>
<dbReference type="PIRSF" id="PIRSF000451">
    <property type="entry name" value="PKS_III"/>
    <property type="match status" value="1"/>
</dbReference>
<dbReference type="SUPFAM" id="SSF53901">
    <property type="entry name" value="Thiolase-like"/>
    <property type="match status" value="2"/>
</dbReference>
<dbReference type="PROSITE" id="PS00441">
    <property type="entry name" value="CHALCONE_SYNTH"/>
    <property type="match status" value="1"/>
</dbReference>
<organism>
    <name type="scientific">Gerbera hybrida</name>
    <name type="common">Daisy</name>
    <dbReference type="NCBI Taxonomy" id="18101"/>
    <lineage>
        <taxon>Eukaryota</taxon>
        <taxon>Viridiplantae</taxon>
        <taxon>Streptophyta</taxon>
        <taxon>Embryophyta</taxon>
        <taxon>Tracheophyta</taxon>
        <taxon>Spermatophyta</taxon>
        <taxon>Magnoliopsida</taxon>
        <taxon>eudicotyledons</taxon>
        <taxon>Gunneridae</taxon>
        <taxon>Pentapetalae</taxon>
        <taxon>asterids</taxon>
        <taxon>campanulids</taxon>
        <taxon>Asterales</taxon>
        <taxon>Asteraceae</taxon>
        <taxon>Mutisioideae</taxon>
        <taxon>Mutisieae</taxon>
        <taxon>Gerbera</taxon>
    </lineage>
</organism>
<keyword id="KW-0012">Acyltransferase</keyword>
<keyword id="KW-0284">Flavonoid biosynthesis</keyword>
<keyword id="KW-0808">Transferase</keyword>
<reference key="1">
    <citation type="journal article" date="1995" name="Plant Mol. Biol.">
        <title>Chalcone synthase-like genes active during corolla development are differentially expressed and encode enzymes with different catalytic properties in Gerbera hybrida (Asteraceae).</title>
        <authorList>
            <person name="Helariutta Y."/>
            <person name="Elomaa P."/>
            <person name="Kotilainen M."/>
            <person name="Griesbach R.J."/>
            <person name="Schroeder J."/>
            <person name="Teeri T.H."/>
        </authorList>
    </citation>
    <scope>NUCLEOTIDE SEQUENCE [MRNA]</scope>
    <source>
        <tissue>Corolla</tissue>
    </source>
</reference>
<feature type="chain" id="PRO_0000215977" description="Chalcone synthase 1">
    <location>
        <begin position="1"/>
        <end position="398"/>
    </location>
</feature>
<feature type="active site" evidence="1">
    <location>
        <position position="167"/>
    </location>
</feature>
<protein>
    <recommendedName>
        <fullName>Chalcone synthase 1</fullName>
        <ecNumber>2.3.1.74</ecNumber>
    </recommendedName>
    <alternativeName>
        <fullName>Naringenin-chalcone synthase 1</fullName>
    </alternativeName>
</protein>
<accession>P48390</accession>
<name>CHS1_GERHY</name>
<gene>
    <name type="primary">CHS1</name>
</gene>
<comment type="function">
    <text>The primary product of this enzyme is 4,2',4',6'-tetrahydroxychalcone (also termed naringenin-chalcone or chalcone) which can under specific conditions spontaneously isomerize into naringenin.</text>
</comment>
<comment type="catalytic activity">
    <reaction evidence="1">
        <text>(E)-4-coumaroyl-CoA + 3 malonyl-CoA + 3 H(+) = 2',4,4',6'-tetrahydroxychalcone + 3 CO2 + 4 CoA</text>
        <dbReference type="Rhea" id="RHEA:11128"/>
        <dbReference type="ChEBI" id="CHEBI:15378"/>
        <dbReference type="ChEBI" id="CHEBI:15413"/>
        <dbReference type="ChEBI" id="CHEBI:16526"/>
        <dbReference type="ChEBI" id="CHEBI:57287"/>
        <dbReference type="ChEBI" id="CHEBI:57384"/>
        <dbReference type="ChEBI" id="CHEBI:85008"/>
        <dbReference type="EC" id="2.3.1.74"/>
    </reaction>
</comment>
<comment type="pathway">
    <text>Secondary metabolite biosynthesis; flavonoid biosynthesis.</text>
</comment>
<comment type="similarity">
    <text evidence="2">Belongs to the thiolase-like superfamily. Chalcone/stilbene synthases family.</text>
</comment>
<proteinExistence type="evidence at transcript level"/>